<sequence>MDVGNKSTMSEFVLLGLSNSWELQMFFFMVFSLLYVATMVGNSLIVITVIVDPHLHSPMYFLLTNLSIIDMSLASFATPKMITDYLTGHKTISFDGCLTQIFFLHLFTGTEIILLMAMSFDRYIAICKPLHYASVISPQVCVALVVASWIMGVMHSMSQVIFALTLPFCGPYEVDSFFCDLPVVFQLACVDTYVLGLFMISTSGIIALSCFIVLFNSYVIVLVTVKHHSSRGSSKALSTCTAHFIVVFLFFGPCIFIYMWPLSSFLTDKILSVFYTIFTPTLNPIIYTLRNQEVKIAMRKLKNRFLNFNKAMPS</sequence>
<reference key="1">
    <citation type="submission" date="2001-07" db="EMBL/GenBank/DDBJ databases">
        <title>Genome-wide discovery and analysis of human seven transmembrane helix receptor genes.</title>
        <authorList>
            <person name="Suwa M."/>
            <person name="Sato T."/>
            <person name="Okouchi I."/>
            <person name="Arita M."/>
            <person name="Futami K."/>
            <person name="Matsumoto S."/>
            <person name="Tsutsumi S."/>
            <person name="Aburatani H."/>
            <person name="Asai K."/>
            <person name="Akiyama Y."/>
        </authorList>
    </citation>
    <scope>NUCLEOTIDE SEQUENCE [GENOMIC DNA]</scope>
</reference>
<reference key="2">
    <citation type="submission" date="2005-09" db="EMBL/GenBank/DDBJ databases">
        <authorList>
            <person name="Mural R.J."/>
            <person name="Istrail S."/>
            <person name="Sutton G.G."/>
            <person name="Florea L."/>
            <person name="Halpern A.L."/>
            <person name="Mobarry C.M."/>
            <person name="Lippert R."/>
            <person name="Walenz B."/>
            <person name="Shatkay H."/>
            <person name="Dew I."/>
            <person name="Miller J.R."/>
            <person name="Flanigan M.J."/>
            <person name="Edwards N.J."/>
            <person name="Bolanos R."/>
            <person name="Fasulo D."/>
            <person name="Halldorsson B.V."/>
            <person name="Hannenhalli S."/>
            <person name="Turner R."/>
            <person name="Yooseph S."/>
            <person name="Lu F."/>
            <person name="Nusskern D.R."/>
            <person name="Shue B.C."/>
            <person name="Zheng X.H."/>
            <person name="Zhong F."/>
            <person name="Delcher A.L."/>
            <person name="Huson D.H."/>
            <person name="Kravitz S.A."/>
            <person name="Mouchard L."/>
            <person name="Reinert K."/>
            <person name="Remington K.A."/>
            <person name="Clark A.G."/>
            <person name="Waterman M.S."/>
            <person name="Eichler E.E."/>
            <person name="Adams M.D."/>
            <person name="Hunkapiller M.W."/>
            <person name="Myers E.W."/>
            <person name="Venter J.C."/>
        </authorList>
    </citation>
    <scope>NUCLEOTIDE SEQUENCE [LARGE SCALE GENOMIC DNA]</scope>
</reference>
<reference key="3">
    <citation type="journal article" date="2004" name="Genome Res.">
        <title>The status, quality, and expansion of the NIH full-length cDNA project: the Mammalian Gene Collection (MGC).</title>
        <authorList>
            <consortium name="The MGC Project Team"/>
        </authorList>
    </citation>
    <scope>NUCLEOTIDE SEQUENCE [LARGE SCALE MRNA]</scope>
</reference>
<reference key="4">
    <citation type="journal article" date="2004" name="Proc. Natl. Acad. Sci. U.S.A.">
        <title>The human olfactory receptor gene family.</title>
        <authorList>
            <person name="Malnic B."/>
            <person name="Godfrey P.A."/>
            <person name="Buck L.B."/>
        </authorList>
    </citation>
    <scope>IDENTIFICATION</scope>
</reference>
<reference key="5">
    <citation type="journal article" date="2004" name="Proc. Natl. Acad. Sci. U.S.A.">
        <authorList>
            <person name="Malnic B."/>
            <person name="Godfrey P.A."/>
            <person name="Buck L.B."/>
        </authorList>
    </citation>
    <scope>ERRATUM OF PUBMED:14983052</scope>
</reference>
<protein>
    <recommendedName>
        <fullName>Olfactory receptor 4K2</fullName>
    </recommendedName>
    <alternativeName>
        <fullName>Olfactory receptor OR14-15</fullName>
    </alternativeName>
</protein>
<comment type="function">
    <text evidence="3">Odorant receptor.</text>
</comment>
<comment type="subcellular location">
    <subcellularLocation>
        <location>Cell membrane</location>
        <topology>Multi-pass membrane protein</topology>
    </subcellularLocation>
</comment>
<comment type="similarity">
    <text evidence="2">Belongs to the G-protein coupled receptor 1 family.</text>
</comment>
<comment type="online information" name="Human Olfactory Receptor Data Exploratorium (HORDE)">
    <link uri="http://genome.weizmann.ac.il/horde/card/index/symbol:OR4K2"/>
</comment>
<name>OR4K2_HUMAN</name>
<evidence type="ECO:0000255" key="1"/>
<evidence type="ECO:0000255" key="2">
    <source>
        <dbReference type="PROSITE-ProRule" id="PRU00521"/>
    </source>
</evidence>
<evidence type="ECO:0000305" key="3"/>
<gene>
    <name type="primary">OR4K2</name>
</gene>
<proteinExistence type="evidence at transcript level"/>
<feature type="chain" id="PRO_0000150553" description="Olfactory receptor 4K2">
    <location>
        <begin position="1"/>
        <end position="314"/>
    </location>
</feature>
<feature type="topological domain" description="Extracellular" evidence="1">
    <location>
        <begin position="1"/>
        <end position="25"/>
    </location>
</feature>
<feature type="transmembrane region" description="Helical; Name=1" evidence="1">
    <location>
        <begin position="26"/>
        <end position="49"/>
    </location>
</feature>
<feature type="topological domain" description="Cytoplasmic" evidence="1">
    <location>
        <begin position="50"/>
        <end position="57"/>
    </location>
</feature>
<feature type="transmembrane region" description="Helical; Name=2" evidence="1">
    <location>
        <begin position="58"/>
        <end position="79"/>
    </location>
</feature>
<feature type="topological domain" description="Extracellular" evidence="1">
    <location>
        <begin position="80"/>
        <end position="100"/>
    </location>
</feature>
<feature type="transmembrane region" description="Helical; Name=3" evidence="1">
    <location>
        <begin position="101"/>
        <end position="120"/>
    </location>
</feature>
<feature type="topological domain" description="Cytoplasmic" evidence="1">
    <location>
        <begin position="121"/>
        <end position="139"/>
    </location>
</feature>
<feature type="transmembrane region" description="Helical; Name=4" evidence="1">
    <location>
        <begin position="140"/>
        <end position="158"/>
    </location>
</feature>
<feature type="topological domain" description="Extracellular" evidence="1">
    <location>
        <begin position="159"/>
        <end position="195"/>
    </location>
</feature>
<feature type="transmembrane region" description="Helical; Name=5" evidence="1">
    <location>
        <begin position="196"/>
        <end position="219"/>
    </location>
</feature>
<feature type="topological domain" description="Cytoplasmic" evidence="1">
    <location>
        <begin position="220"/>
        <end position="235"/>
    </location>
</feature>
<feature type="transmembrane region" description="Helical; Name=6" evidence="1">
    <location>
        <begin position="236"/>
        <end position="258"/>
    </location>
</feature>
<feature type="topological domain" description="Extracellular" evidence="1">
    <location>
        <begin position="259"/>
        <end position="269"/>
    </location>
</feature>
<feature type="transmembrane region" description="Helical; Name=7" evidence="1">
    <location>
        <begin position="270"/>
        <end position="289"/>
    </location>
</feature>
<feature type="topological domain" description="Cytoplasmic" evidence="1">
    <location>
        <begin position="290"/>
        <end position="314"/>
    </location>
</feature>
<feature type="glycosylation site" description="N-linked (GlcNAc...) asparagine" evidence="1">
    <location>
        <position position="5"/>
    </location>
</feature>
<feature type="disulfide bond" evidence="2">
    <location>
        <begin position="97"/>
        <end position="189"/>
    </location>
</feature>
<feature type="sequence variant" id="VAR_053171" description="In dbSNP:rs12883767.">
    <original>N</original>
    <variation>I</variation>
    <location>
        <position position="307"/>
    </location>
</feature>
<dbReference type="EMBL" id="AB065883">
    <property type="protein sequence ID" value="BAC06101.1"/>
    <property type="molecule type" value="Genomic_DNA"/>
</dbReference>
<dbReference type="EMBL" id="CH471078">
    <property type="protein sequence ID" value="EAW66496.1"/>
    <property type="molecule type" value="Genomic_DNA"/>
</dbReference>
<dbReference type="EMBL" id="BC136941">
    <property type="protein sequence ID" value="AAI36942.1"/>
    <property type="molecule type" value="mRNA"/>
</dbReference>
<dbReference type="EMBL" id="BC136942">
    <property type="protein sequence ID" value="AAI36943.1"/>
    <property type="molecule type" value="mRNA"/>
</dbReference>
<dbReference type="EMBL" id="BK004357">
    <property type="protein sequence ID" value="DAA04755.1"/>
    <property type="molecule type" value="Genomic_DNA"/>
</dbReference>
<dbReference type="CCDS" id="CCDS32023.1"/>
<dbReference type="RefSeq" id="NP_001005501.1">
    <property type="nucleotide sequence ID" value="NM_001005501.2"/>
</dbReference>
<dbReference type="SMR" id="Q8NGD2"/>
<dbReference type="FunCoup" id="Q8NGD2">
    <property type="interactions" value="416"/>
</dbReference>
<dbReference type="STRING" id="9606.ENSP00000493007"/>
<dbReference type="GlyCosmos" id="Q8NGD2">
    <property type="glycosylation" value="1 site, No reported glycans"/>
</dbReference>
<dbReference type="GlyGen" id="Q8NGD2">
    <property type="glycosylation" value="1 site"/>
</dbReference>
<dbReference type="BioMuta" id="OR4K2"/>
<dbReference type="DMDM" id="38372672"/>
<dbReference type="PaxDb" id="9606-ENSP00000298642"/>
<dbReference type="ProteomicsDB" id="73482"/>
<dbReference type="Antibodypedia" id="58519">
    <property type="antibodies" value="95 antibodies from 22 providers"/>
</dbReference>
<dbReference type="DNASU" id="390431"/>
<dbReference type="Ensembl" id="ENST00000298642.2">
    <property type="protein sequence ID" value="ENSP00000298642.2"/>
    <property type="gene ID" value="ENSG00000165762.3"/>
</dbReference>
<dbReference type="Ensembl" id="ENST00000641885.1">
    <property type="protein sequence ID" value="ENSP00000493007.1"/>
    <property type="gene ID" value="ENSG00000165762.3"/>
</dbReference>
<dbReference type="Ensembl" id="ENST00000708835.1">
    <property type="protein sequence ID" value="ENSP00000517366.1"/>
    <property type="gene ID" value="ENSG00000291804.1"/>
</dbReference>
<dbReference type="Ensembl" id="ENST00000708836.1">
    <property type="protein sequence ID" value="ENSP00000517367.1"/>
    <property type="gene ID" value="ENSG00000291804.1"/>
</dbReference>
<dbReference type="GeneID" id="390431"/>
<dbReference type="KEGG" id="hsa:390431"/>
<dbReference type="MANE-Select" id="ENST00000641885.1">
    <property type="protein sequence ID" value="ENSP00000493007.1"/>
    <property type="RefSeq nucleotide sequence ID" value="NM_001005501.2"/>
    <property type="RefSeq protein sequence ID" value="NP_001005501.1"/>
</dbReference>
<dbReference type="UCSC" id="uc001vwh.2">
    <property type="organism name" value="human"/>
</dbReference>
<dbReference type="AGR" id="HGNC:14728"/>
<dbReference type="CTD" id="390431"/>
<dbReference type="GeneCards" id="OR4K2"/>
<dbReference type="HGNC" id="HGNC:14728">
    <property type="gene designation" value="OR4K2"/>
</dbReference>
<dbReference type="HPA" id="ENSG00000165762">
    <property type="expression patterns" value="Not detected"/>
</dbReference>
<dbReference type="neXtProt" id="NX_Q8NGD2"/>
<dbReference type="PharmGKB" id="PA32317"/>
<dbReference type="VEuPathDB" id="HostDB:ENSG00000165762"/>
<dbReference type="eggNOG" id="ENOG502T0ZV">
    <property type="taxonomic scope" value="Eukaryota"/>
</dbReference>
<dbReference type="GeneTree" id="ENSGT00940000162171"/>
<dbReference type="HOGENOM" id="CLU_012526_8_2_1"/>
<dbReference type="InParanoid" id="Q8NGD2"/>
<dbReference type="OMA" id="YNSHFIV"/>
<dbReference type="OrthoDB" id="6147321at2759"/>
<dbReference type="PAN-GO" id="Q8NGD2">
    <property type="GO annotations" value="2 GO annotations based on evolutionary models"/>
</dbReference>
<dbReference type="PhylomeDB" id="Q8NGD2"/>
<dbReference type="TreeFam" id="TF337251"/>
<dbReference type="PathwayCommons" id="Q8NGD2"/>
<dbReference type="Reactome" id="R-HSA-9752946">
    <property type="pathway name" value="Expression and translocation of olfactory receptors"/>
</dbReference>
<dbReference type="BioGRID-ORCS" id="390431">
    <property type="hits" value="11 hits in 740 CRISPR screens"/>
</dbReference>
<dbReference type="GeneWiki" id="OR4K2"/>
<dbReference type="GenomeRNAi" id="390431"/>
<dbReference type="Pharos" id="Q8NGD2">
    <property type="development level" value="Tdark"/>
</dbReference>
<dbReference type="PRO" id="PR:Q8NGD2"/>
<dbReference type="Proteomes" id="UP000005640">
    <property type="component" value="Chromosome 14"/>
</dbReference>
<dbReference type="RNAct" id="Q8NGD2">
    <property type="molecule type" value="protein"/>
</dbReference>
<dbReference type="Bgee" id="ENSG00000165762">
    <property type="expression patterns" value="Expressed in male germ line stem cell (sensu Vertebrata) in testis and 1 other cell type or tissue"/>
</dbReference>
<dbReference type="ExpressionAtlas" id="Q8NGD2">
    <property type="expression patterns" value="baseline and differential"/>
</dbReference>
<dbReference type="GO" id="GO:0005886">
    <property type="term" value="C:plasma membrane"/>
    <property type="evidence" value="ECO:0007669"/>
    <property type="project" value="UniProtKB-SubCell"/>
</dbReference>
<dbReference type="GO" id="GO:0004930">
    <property type="term" value="F:G protein-coupled receptor activity"/>
    <property type="evidence" value="ECO:0007669"/>
    <property type="project" value="UniProtKB-KW"/>
</dbReference>
<dbReference type="GO" id="GO:0004984">
    <property type="term" value="F:olfactory receptor activity"/>
    <property type="evidence" value="ECO:0000318"/>
    <property type="project" value="GO_Central"/>
</dbReference>
<dbReference type="CDD" id="cd15226">
    <property type="entry name" value="7tmA_OR4-like"/>
    <property type="match status" value="1"/>
</dbReference>
<dbReference type="FunFam" id="1.20.1070.10:FF:000012">
    <property type="entry name" value="Olfactory receptor"/>
    <property type="match status" value="1"/>
</dbReference>
<dbReference type="Gene3D" id="1.20.1070.10">
    <property type="entry name" value="Rhodopsin 7-helix transmembrane proteins"/>
    <property type="match status" value="1"/>
</dbReference>
<dbReference type="InterPro" id="IPR000276">
    <property type="entry name" value="GPCR_Rhodpsn"/>
</dbReference>
<dbReference type="InterPro" id="IPR017452">
    <property type="entry name" value="GPCR_Rhodpsn_7TM"/>
</dbReference>
<dbReference type="InterPro" id="IPR000725">
    <property type="entry name" value="Olfact_rcpt"/>
</dbReference>
<dbReference type="InterPro" id="IPR050427">
    <property type="entry name" value="Olfactory_Receptors"/>
</dbReference>
<dbReference type="PANTHER" id="PTHR48002">
    <property type="entry name" value="OLFACTORY RECEPTOR"/>
    <property type="match status" value="1"/>
</dbReference>
<dbReference type="Pfam" id="PF13853">
    <property type="entry name" value="7tm_4"/>
    <property type="match status" value="1"/>
</dbReference>
<dbReference type="PRINTS" id="PR00237">
    <property type="entry name" value="GPCRRHODOPSN"/>
</dbReference>
<dbReference type="PRINTS" id="PR00245">
    <property type="entry name" value="OLFACTORYR"/>
</dbReference>
<dbReference type="SUPFAM" id="SSF81321">
    <property type="entry name" value="Family A G protein-coupled receptor-like"/>
    <property type="match status" value="1"/>
</dbReference>
<dbReference type="PROSITE" id="PS00237">
    <property type="entry name" value="G_PROTEIN_RECEP_F1_1"/>
    <property type="match status" value="1"/>
</dbReference>
<dbReference type="PROSITE" id="PS50262">
    <property type="entry name" value="G_PROTEIN_RECEP_F1_2"/>
    <property type="match status" value="1"/>
</dbReference>
<keyword id="KW-1003">Cell membrane</keyword>
<keyword id="KW-1015">Disulfide bond</keyword>
<keyword id="KW-0297">G-protein coupled receptor</keyword>
<keyword id="KW-0325">Glycoprotein</keyword>
<keyword id="KW-0472">Membrane</keyword>
<keyword id="KW-0552">Olfaction</keyword>
<keyword id="KW-0675">Receptor</keyword>
<keyword id="KW-1185">Reference proteome</keyword>
<keyword id="KW-0716">Sensory transduction</keyword>
<keyword id="KW-0807">Transducer</keyword>
<keyword id="KW-0812">Transmembrane</keyword>
<keyword id="KW-1133">Transmembrane helix</keyword>
<organism>
    <name type="scientific">Homo sapiens</name>
    <name type="common">Human</name>
    <dbReference type="NCBI Taxonomy" id="9606"/>
    <lineage>
        <taxon>Eukaryota</taxon>
        <taxon>Metazoa</taxon>
        <taxon>Chordata</taxon>
        <taxon>Craniata</taxon>
        <taxon>Vertebrata</taxon>
        <taxon>Euteleostomi</taxon>
        <taxon>Mammalia</taxon>
        <taxon>Eutheria</taxon>
        <taxon>Euarchontoglires</taxon>
        <taxon>Primates</taxon>
        <taxon>Haplorrhini</taxon>
        <taxon>Catarrhini</taxon>
        <taxon>Hominidae</taxon>
        <taxon>Homo</taxon>
    </lineage>
</organism>
<accession>Q8NGD2</accession>
<accession>B2RNK8</accession>
<accession>Q6IFA5</accession>